<evidence type="ECO:0000250" key="1">
    <source>
        <dbReference type="UniProtKB" id="Q96RP9"/>
    </source>
</evidence>
<evidence type="ECO:0000255" key="2">
    <source>
        <dbReference type="HAMAP-Rule" id="MF_03061"/>
    </source>
</evidence>
<evidence type="ECO:0000305" key="3"/>
<sequence length="748" mass="83523">MRLLREASKLGPRLLQYNGVTRNKPLSLAFCRHCSSGIVPNERIRNIGISAHIDSGKTTLTERVLYYTGRIAHMHEVKGKDGVGAVMDSMELERQRGITIQSAATYTMWKDTNINIIDTPGHVDFTIEVERALRVLDGAVLVLCAVGGVQCQTMTVNRQMKRYNVPFLTFINKLDRMGSNPSRAVLQLRSKLNHNAAFIQIPIGVESKFKGIIDLVEERAMYFDGEFGQSVRYDDIPAEFRAEATDRRQELIESVANSDEILGEMFLEEKIPTVADLKPAIRRATLKRLFTPVLVGSALKNKGVQPLLDAVLEYLPNPSEVQNFAILNHENSEETSRILMKSDRDSSQPFVGLAFKLEAGRFGQLTYVRVYQGMLRKSDYIYNTRTGKKVRVQRLVCLHADIMEDIEEAYAGDICALFGIDCASGDTFTSKSNDNLSMESIHVPDPVISVSMKPTNKNDLDKFSKGISRFTREDPTFRVHYEVESKETIVSGMGELHLEIYAQRMEREYACPCVMGKPKVAFRETISNTAPFDFTHKKQSGGAGQYGKVIGFLEPLEPESYTKVEFEDKTVGTNVPKQFVPAVERGFREACEKGPLTGHKISGLRFVLEDGAHHMVDSNEISFIRAGEGALKQAMEKSTVCILEPIMSVEIVAPSEFQGPVIAGINRRHGVIVGQDGSDGYFTLYADVPLNDMFGYASELRSCTEGKGEYTMDYSRYQPCLPSTQEELINKYLEATGQLPAKKGKVKG</sequence>
<dbReference type="EC" id="3.6.5.-" evidence="1"/>
<dbReference type="EMBL" id="BC142588">
    <property type="protein sequence ID" value="AAI42589.1"/>
    <property type="molecule type" value="mRNA"/>
</dbReference>
<dbReference type="RefSeq" id="NP_001093367.1">
    <property type="nucleotide sequence ID" value="NM_001099897.1"/>
</dbReference>
<dbReference type="SMR" id="A5PKR8"/>
<dbReference type="GeneID" id="100101315"/>
<dbReference type="KEGG" id="xla:100101315"/>
<dbReference type="AGR" id="Xenbase:XB-GENE-983075"/>
<dbReference type="CTD" id="100101315"/>
<dbReference type="Xenbase" id="XB-GENE-983075">
    <property type="gene designation" value="gfm1.L"/>
</dbReference>
<dbReference type="OrthoDB" id="198619at2759"/>
<dbReference type="UniPathway" id="UPA00345"/>
<dbReference type="Proteomes" id="UP000186698">
    <property type="component" value="Chromosome 5L"/>
</dbReference>
<dbReference type="Bgee" id="100101315">
    <property type="expression patterns" value="Expressed in testis and 19 other cell types or tissues"/>
</dbReference>
<dbReference type="GO" id="GO:0005739">
    <property type="term" value="C:mitochondrion"/>
    <property type="evidence" value="ECO:0000318"/>
    <property type="project" value="GO_Central"/>
</dbReference>
<dbReference type="GO" id="GO:0005525">
    <property type="term" value="F:GTP binding"/>
    <property type="evidence" value="ECO:0007669"/>
    <property type="project" value="UniProtKB-UniRule"/>
</dbReference>
<dbReference type="GO" id="GO:0003924">
    <property type="term" value="F:GTPase activity"/>
    <property type="evidence" value="ECO:0000250"/>
    <property type="project" value="UniProtKB"/>
</dbReference>
<dbReference type="GO" id="GO:0003746">
    <property type="term" value="F:translation elongation factor activity"/>
    <property type="evidence" value="ECO:0000250"/>
    <property type="project" value="UniProtKB"/>
</dbReference>
<dbReference type="GO" id="GO:0070125">
    <property type="term" value="P:mitochondrial translational elongation"/>
    <property type="evidence" value="ECO:0000250"/>
    <property type="project" value="UniProtKB"/>
</dbReference>
<dbReference type="CDD" id="cd01886">
    <property type="entry name" value="EF-G"/>
    <property type="match status" value="1"/>
</dbReference>
<dbReference type="CDD" id="cd16262">
    <property type="entry name" value="EFG_III"/>
    <property type="match status" value="1"/>
</dbReference>
<dbReference type="CDD" id="cd01434">
    <property type="entry name" value="EFG_mtEFG1_IV"/>
    <property type="match status" value="1"/>
</dbReference>
<dbReference type="CDD" id="cd04097">
    <property type="entry name" value="mtEFG1_C"/>
    <property type="match status" value="1"/>
</dbReference>
<dbReference type="CDD" id="cd04091">
    <property type="entry name" value="mtEFG1_II_like"/>
    <property type="match status" value="1"/>
</dbReference>
<dbReference type="FunFam" id="3.30.230.10:FF:000003">
    <property type="entry name" value="Elongation factor G"/>
    <property type="match status" value="1"/>
</dbReference>
<dbReference type="FunFam" id="3.30.70.240:FF:000001">
    <property type="entry name" value="Elongation factor G"/>
    <property type="match status" value="1"/>
</dbReference>
<dbReference type="FunFam" id="2.40.30.10:FF:000022">
    <property type="entry name" value="Elongation factor G, mitochondrial"/>
    <property type="match status" value="1"/>
</dbReference>
<dbReference type="FunFam" id="3.30.70.870:FF:000008">
    <property type="entry name" value="Elongation factor G, mitochondrial"/>
    <property type="match status" value="1"/>
</dbReference>
<dbReference type="FunFam" id="3.40.50.300:FF:000539">
    <property type="entry name" value="Elongation factor G, mitochondrial"/>
    <property type="match status" value="1"/>
</dbReference>
<dbReference type="Gene3D" id="3.30.230.10">
    <property type="match status" value="1"/>
</dbReference>
<dbReference type="Gene3D" id="3.30.70.240">
    <property type="match status" value="1"/>
</dbReference>
<dbReference type="Gene3D" id="3.30.70.870">
    <property type="entry name" value="Elongation Factor G (Translational Gtpase), domain 3"/>
    <property type="match status" value="1"/>
</dbReference>
<dbReference type="Gene3D" id="3.40.50.300">
    <property type="entry name" value="P-loop containing nucleotide triphosphate hydrolases"/>
    <property type="match status" value="1"/>
</dbReference>
<dbReference type="Gene3D" id="2.40.30.10">
    <property type="entry name" value="Translation factors"/>
    <property type="match status" value="1"/>
</dbReference>
<dbReference type="HAMAP" id="MF_00054_B">
    <property type="entry name" value="EF_G_EF_2_B"/>
    <property type="match status" value="1"/>
</dbReference>
<dbReference type="InterPro" id="IPR041095">
    <property type="entry name" value="EFG_II"/>
</dbReference>
<dbReference type="InterPro" id="IPR009022">
    <property type="entry name" value="EFG_III"/>
</dbReference>
<dbReference type="InterPro" id="IPR035647">
    <property type="entry name" value="EFG_III/V"/>
</dbReference>
<dbReference type="InterPro" id="IPR047872">
    <property type="entry name" value="EFG_IV"/>
</dbReference>
<dbReference type="InterPro" id="IPR035649">
    <property type="entry name" value="EFG_V"/>
</dbReference>
<dbReference type="InterPro" id="IPR000640">
    <property type="entry name" value="EFG_V-like"/>
</dbReference>
<dbReference type="InterPro" id="IPR004161">
    <property type="entry name" value="EFTu-like_2"/>
</dbReference>
<dbReference type="InterPro" id="IPR031157">
    <property type="entry name" value="G_TR_CS"/>
</dbReference>
<dbReference type="InterPro" id="IPR027417">
    <property type="entry name" value="P-loop_NTPase"/>
</dbReference>
<dbReference type="InterPro" id="IPR020568">
    <property type="entry name" value="Ribosomal_Su5_D2-typ_SF"/>
</dbReference>
<dbReference type="InterPro" id="IPR014721">
    <property type="entry name" value="Ribsml_uS5_D2-typ_fold_subgr"/>
</dbReference>
<dbReference type="InterPro" id="IPR005225">
    <property type="entry name" value="Small_GTP-bd"/>
</dbReference>
<dbReference type="InterPro" id="IPR000795">
    <property type="entry name" value="T_Tr_GTP-bd_dom"/>
</dbReference>
<dbReference type="InterPro" id="IPR009000">
    <property type="entry name" value="Transl_B-barrel_sf"/>
</dbReference>
<dbReference type="InterPro" id="IPR004540">
    <property type="entry name" value="Transl_elong_EFG/EF2"/>
</dbReference>
<dbReference type="InterPro" id="IPR005517">
    <property type="entry name" value="Transl_elong_EFG/EF2_IV"/>
</dbReference>
<dbReference type="NCBIfam" id="TIGR00484">
    <property type="entry name" value="EF-G"/>
    <property type="match status" value="1"/>
</dbReference>
<dbReference type="NCBIfam" id="NF009381">
    <property type="entry name" value="PRK12740.1-5"/>
    <property type="match status" value="1"/>
</dbReference>
<dbReference type="NCBIfam" id="TIGR00231">
    <property type="entry name" value="small_GTP"/>
    <property type="match status" value="1"/>
</dbReference>
<dbReference type="PANTHER" id="PTHR43636">
    <property type="entry name" value="ELONGATION FACTOR G, MITOCHONDRIAL"/>
    <property type="match status" value="1"/>
</dbReference>
<dbReference type="PANTHER" id="PTHR43636:SF2">
    <property type="entry name" value="ELONGATION FACTOR G, MITOCHONDRIAL"/>
    <property type="match status" value="1"/>
</dbReference>
<dbReference type="Pfam" id="PF00679">
    <property type="entry name" value="EFG_C"/>
    <property type="match status" value="1"/>
</dbReference>
<dbReference type="Pfam" id="PF14492">
    <property type="entry name" value="EFG_III"/>
    <property type="match status" value="1"/>
</dbReference>
<dbReference type="Pfam" id="PF03764">
    <property type="entry name" value="EFG_IV"/>
    <property type="match status" value="1"/>
</dbReference>
<dbReference type="Pfam" id="PF00009">
    <property type="entry name" value="GTP_EFTU"/>
    <property type="match status" value="1"/>
</dbReference>
<dbReference type="Pfam" id="PF03144">
    <property type="entry name" value="GTP_EFTU_D2"/>
    <property type="match status" value="1"/>
</dbReference>
<dbReference type="PRINTS" id="PR00315">
    <property type="entry name" value="ELONGATNFCT"/>
</dbReference>
<dbReference type="SMART" id="SM00838">
    <property type="entry name" value="EFG_C"/>
    <property type="match status" value="1"/>
</dbReference>
<dbReference type="SMART" id="SM00889">
    <property type="entry name" value="EFG_IV"/>
    <property type="match status" value="1"/>
</dbReference>
<dbReference type="SUPFAM" id="SSF54980">
    <property type="entry name" value="EF-G C-terminal domain-like"/>
    <property type="match status" value="2"/>
</dbReference>
<dbReference type="SUPFAM" id="SSF52540">
    <property type="entry name" value="P-loop containing nucleoside triphosphate hydrolases"/>
    <property type="match status" value="1"/>
</dbReference>
<dbReference type="SUPFAM" id="SSF54211">
    <property type="entry name" value="Ribosomal protein S5 domain 2-like"/>
    <property type="match status" value="1"/>
</dbReference>
<dbReference type="SUPFAM" id="SSF50447">
    <property type="entry name" value="Translation proteins"/>
    <property type="match status" value="1"/>
</dbReference>
<dbReference type="PROSITE" id="PS00301">
    <property type="entry name" value="G_TR_1"/>
    <property type="match status" value="1"/>
</dbReference>
<dbReference type="PROSITE" id="PS51722">
    <property type="entry name" value="G_TR_2"/>
    <property type="match status" value="1"/>
</dbReference>
<comment type="function">
    <text evidence="2">Mitochondrial GTPase that catalyzes the GTP-dependent ribosomal translocation step during translation elongation. During this step, the ribosome changes from the pre-translocational (PRE) to the post-translocational (POST) state as the newly formed A-site-bound peptidyl-tRNA and P-site-bound deacylated tRNA move to the P and E sites, respectively. Catalyzes the coordinated movement of the two tRNA molecules, the mRNA and conformational changes in the ribosome. Does not mediate the disassembly of ribosomes from messenger RNA at the termination of mitochondrial protein biosynthesis.</text>
</comment>
<comment type="catalytic activity">
    <reaction evidence="1">
        <text>GTP + H2O = GDP + phosphate + H(+)</text>
        <dbReference type="Rhea" id="RHEA:19669"/>
        <dbReference type="ChEBI" id="CHEBI:15377"/>
        <dbReference type="ChEBI" id="CHEBI:15378"/>
        <dbReference type="ChEBI" id="CHEBI:37565"/>
        <dbReference type="ChEBI" id="CHEBI:43474"/>
        <dbReference type="ChEBI" id="CHEBI:58189"/>
    </reaction>
    <physiologicalReaction direction="left-to-right" evidence="1">
        <dbReference type="Rhea" id="RHEA:19670"/>
    </physiologicalReaction>
</comment>
<comment type="pathway">
    <text evidence="2">Protein biosynthesis; polypeptide chain elongation.</text>
</comment>
<comment type="subcellular location">
    <subcellularLocation>
        <location evidence="2">Mitochondrion</location>
    </subcellularLocation>
</comment>
<comment type="similarity">
    <text evidence="3">Belongs to the TRAFAC class translation factor GTPase superfamily. Classic translation factor GTPase family. EF-G/EF-2 subfamily.</text>
</comment>
<keyword id="KW-0251">Elongation factor</keyword>
<keyword id="KW-0342">GTP-binding</keyword>
<keyword id="KW-0378">Hydrolase</keyword>
<keyword id="KW-0496">Mitochondrion</keyword>
<keyword id="KW-0547">Nucleotide-binding</keyword>
<keyword id="KW-0648">Protein biosynthesis</keyword>
<keyword id="KW-1185">Reference proteome</keyword>
<keyword id="KW-0809">Transit peptide</keyword>
<protein>
    <recommendedName>
        <fullName evidence="2">Elongation factor G, mitochondrial</fullName>
        <shortName evidence="2">EF-Gmt</shortName>
        <ecNumber evidence="1">3.6.5.-</ecNumber>
    </recommendedName>
    <alternativeName>
        <fullName evidence="2">Elongation factor G 1, mitochondrial</fullName>
        <shortName evidence="2">mEF-G 1</shortName>
    </alternativeName>
    <alternativeName>
        <fullName evidence="2">Elongation factor G1</fullName>
    </alternativeName>
</protein>
<organism>
    <name type="scientific">Xenopus laevis</name>
    <name type="common">African clawed frog</name>
    <dbReference type="NCBI Taxonomy" id="8355"/>
    <lineage>
        <taxon>Eukaryota</taxon>
        <taxon>Metazoa</taxon>
        <taxon>Chordata</taxon>
        <taxon>Craniata</taxon>
        <taxon>Vertebrata</taxon>
        <taxon>Euteleostomi</taxon>
        <taxon>Amphibia</taxon>
        <taxon>Batrachia</taxon>
        <taxon>Anura</taxon>
        <taxon>Pipoidea</taxon>
        <taxon>Pipidae</taxon>
        <taxon>Xenopodinae</taxon>
        <taxon>Xenopus</taxon>
        <taxon>Xenopus</taxon>
    </lineage>
</organism>
<proteinExistence type="evidence at transcript level"/>
<feature type="transit peptide" description="Mitochondrion" evidence="2">
    <location>
        <begin position="1"/>
        <end position="33"/>
    </location>
</feature>
<feature type="chain" id="PRO_0000385539" description="Elongation factor G, mitochondrial">
    <location>
        <begin position="34"/>
        <end position="748"/>
    </location>
</feature>
<feature type="domain" description="tr-type G">
    <location>
        <begin position="42"/>
        <end position="319"/>
    </location>
</feature>
<feature type="binding site" evidence="2">
    <location>
        <begin position="51"/>
        <end position="58"/>
    </location>
    <ligand>
        <name>GTP</name>
        <dbReference type="ChEBI" id="CHEBI:37565"/>
    </ligand>
</feature>
<feature type="binding site" evidence="2">
    <location>
        <begin position="118"/>
        <end position="122"/>
    </location>
    <ligand>
        <name>GTP</name>
        <dbReference type="ChEBI" id="CHEBI:37565"/>
    </ligand>
</feature>
<feature type="binding site" evidence="2">
    <location>
        <begin position="172"/>
        <end position="175"/>
    </location>
    <ligand>
        <name>GTP</name>
        <dbReference type="ChEBI" id="CHEBI:37565"/>
    </ligand>
</feature>
<name>EFGM_XENLA</name>
<reference key="1">
    <citation type="submission" date="2007-06" db="EMBL/GenBank/DDBJ databases">
        <authorList>
            <consortium name="NIH - Xenopus Gene Collection (XGC) project"/>
        </authorList>
    </citation>
    <scope>NUCLEOTIDE SEQUENCE [LARGE SCALE MRNA]</scope>
    <source>
        <tissue>Fat body</tissue>
    </source>
</reference>
<gene>
    <name type="primary">gfm1</name>
    <name type="synonym">efg1</name>
</gene>
<accession>A5PKR8</accession>